<sequence length="557" mass="57905">MLRSDAVTKGIQRSPNRAMLRAVGFGDSDFGKPILGIANGYSTITPCNIGLNDLAKRAEEAARQAGGMPQMFGTITVSDGISMGTEGMKYSLVSREVIADAIETACNGQSMDGVLAVGGCDKNMPGAMLAMARMNIPSVFVYGGTIKPGKLGGCDLTVVSAFEAVGQLTSGKIDEVQLTAVEKNACPGAGSCGGMFTANTMSAAIETMGLSLPYSSTMAAEDEEKADSAARSAEVLVEAVKANIRPLDLLTKEAFENAISVIMAVGGSTNAVLHLLAIARTAGVDLSIDDFERIRQRVPVICDLKPSGRYVTVDLHNAGGIPQVMKLLLDAGLLHSDCRTVEGKSLKELLADVPSEPPAGQEVIRPLSNPLYAKGHLAILKGNLASEGSVAKISGVKTPVLTGPARVFESEEDCLAAILDKKIQAGDVVVVRNEGPVGGPGMREMLAPTSAIVGQGLGDKVALITDGRFSGGTYGLVVGHVAPEAAVGGTIGLVQEGDSITVDADQLLLQLNVDQAELDRRRAGWSKPEPRYRSGILGKYARLVSSSSRGATTDHAD</sequence>
<evidence type="ECO:0000255" key="1">
    <source>
        <dbReference type="HAMAP-Rule" id="MF_00012"/>
    </source>
</evidence>
<organism>
    <name type="scientific">Synechococcus sp. (strain CC9605)</name>
    <dbReference type="NCBI Taxonomy" id="110662"/>
    <lineage>
        <taxon>Bacteria</taxon>
        <taxon>Bacillati</taxon>
        <taxon>Cyanobacteriota</taxon>
        <taxon>Cyanophyceae</taxon>
        <taxon>Synechococcales</taxon>
        <taxon>Synechococcaceae</taxon>
        <taxon>Synechococcus</taxon>
    </lineage>
</organism>
<accession>Q3AK67</accession>
<gene>
    <name evidence="1" type="primary">ilvD</name>
    <name type="ordered locus">Syncc9605_1260</name>
</gene>
<comment type="function">
    <text evidence="1">Functions in the biosynthesis of branched-chain amino acids. Catalyzes the dehydration of (2R,3R)-2,3-dihydroxy-3-methylpentanoate (2,3-dihydroxy-3-methylvalerate) into 2-oxo-3-methylpentanoate (2-oxo-3-methylvalerate) and of (2R)-2,3-dihydroxy-3-methylbutanoate (2,3-dihydroxyisovalerate) into 2-oxo-3-methylbutanoate (2-oxoisovalerate), the penultimate precursor to L-isoleucine and L-valine, respectively.</text>
</comment>
<comment type="catalytic activity">
    <reaction evidence="1">
        <text>(2R)-2,3-dihydroxy-3-methylbutanoate = 3-methyl-2-oxobutanoate + H2O</text>
        <dbReference type="Rhea" id="RHEA:24809"/>
        <dbReference type="ChEBI" id="CHEBI:11851"/>
        <dbReference type="ChEBI" id="CHEBI:15377"/>
        <dbReference type="ChEBI" id="CHEBI:49072"/>
        <dbReference type="EC" id="4.2.1.9"/>
    </reaction>
    <physiologicalReaction direction="left-to-right" evidence="1">
        <dbReference type="Rhea" id="RHEA:24810"/>
    </physiologicalReaction>
</comment>
<comment type="catalytic activity">
    <reaction evidence="1">
        <text>(2R,3R)-2,3-dihydroxy-3-methylpentanoate = (S)-3-methyl-2-oxopentanoate + H2O</text>
        <dbReference type="Rhea" id="RHEA:27694"/>
        <dbReference type="ChEBI" id="CHEBI:15377"/>
        <dbReference type="ChEBI" id="CHEBI:35146"/>
        <dbReference type="ChEBI" id="CHEBI:49258"/>
        <dbReference type="EC" id="4.2.1.9"/>
    </reaction>
    <physiologicalReaction direction="left-to-right" evidence="1">
        <dbReference type="Rhea" id="RHEA:27695"/>
    </physiologicalReaction>
</comment>
<comment type="cofactor">
    <cofactor evidence="1">
        <name>[2Fe-2S] cluster</name>
        <dbReference type="ChEBI" id="CHEBI:190135"/>
    </cofactor>
    <text evidence="1">Binds 1 [2Fe-2S] cluster per subunit. This cluster acts as a Lewis acid cofactor.</text>
</comment>
<comment type="cofactor">
    <cofactor evidence="1">
        <name>Mg(2+)</name>
        <dbReference type="ChEBI" id="CHEBI:18420"/>
    </cofactor>
</comment>
<comment type="pathway">
    <text evidence="1">Amino-acid biosynthesis; L-isoleucine biosynthesis; L-isoleucine from 2-oxobutanoate: step 3/4.</text>
</comment>
<comment type="pathway">
    <text evidence="1">Amino-acid biosynthesis; L-valine biosynthesis; L-valine from pyruvate: step 3/4.</text>
</comment>
<comment type="subunit">
    <text evidence="1">Homodimer.</text>
</comment>
<comment type="similarity">
    <text evidence="1">Belongs to the IlvD/Edd family.</text>
</comment>
<dbReference type="EC" id="4.2.1.9" evidence="1"/>
<dbReference type="EMBL" id="CP000110">
    <property type="protein sequence ID" value="ABB35015.1"/>
    <property type="molecule type" value="Genomic_DNA"/>
</dbReference>
<dbReference type="RefSeq" id="WP_011364234.1">
    <property type="nucleotide sequence ID" value="NC_007516.1"/>
</dbReference>
<dbReference type="SMR" id="Q3AK67"/>
<dbReference type="STRING" id="110662.Syncc9605_1260"/>
<dbReference type="KEGG" id="syd:Syncc9605_1260"/>
<dbReference type="eggNOG" id="COG0129">
    <property type="taxonomic scope" value="Bacteria"/>
</dbReference>
<dbReference type="HOGENOM" id="CLU_014271_4_1_3"/>
<dbReference type="OrthoDB" id="9807077at2"/>
<dbReference type="UniPathway" id="UPA00047">
    <property type="reaction ID" value="UER00057"/>
</dbReference>
<dbReference type="UniPathway" id="UPA00049">
    <property type="reaction ID" value="UER00061"/>
</dbReference>
<dbReference type="GO" id="GO:0051537">
    <property type="term" value="F:2 iron, 2 sulfur cluster binding"/>
    <property type="evidence" value="ECO:0007669"/>
    <property type="project" value="UniProtKB-UniRule"/>
</dbReference>
<dbReference type="GO" id="GO:0004160">
    <property type="term" value="F:dihydroxy-acid dehydratase activity"/>
    <property type="evidence" value="ECO:0007669"/>
    <property type="project" value="UniProtKB-UniRule"/>
</dbReference>
<dbReference type="GO" id="GO:0000287">
    <property type="term" value="F:magnesium ion binding"/>
    <property type="evidence" value="ECO:0007669"/>
    <property type="project" value="UniProtKB-UniRule"/>
</dbReference>
<dbReference type="GO" id="GO:0009097">
    <property type="term" value="P:isoleucine biosynthetic process"/>
    <property type="evidence" value="ECO:0007669"/>
    <property type="project" value="UniProtKB-UniRule"/>
</dbReference>
<dbReference type="GO" id="GO:0009099">
    <property type="term" value="P:L-valine biosynthetic process"/>
    <property type="evidence" value="ECO:0007669"/>
    <property type="project" value="UniProtKB-UniRule"/>
</dbReference>
<dbReference type="FunFam" id="3.50.30.80:FF:000001">
    <property type="entry name" value="Dihydroxy-acid dehydratase"/>
    <property type="match status" value="1"/>
</dbReference>
<dbReference type="Gene3D" id="3.50.30.80">
    <property type="entry name" value="IlvD/EDD C-terminal domain-like"/>
    <property type="match status" value="1"/>
</dbReference>
<dbReference type="HAMAP" id="MF_00012">
    <property type="entry name" value="IlvD"/>
    <property type="match status" value="1"/>
</dbReference>
<dbReference type="InterPro" id="IPR050165">
    <property type="entry name" value="DHAD_IlvD/Edd"/>
</dbReference>
<dbReference type="InterPro" id="IPR042096">
    <property type="entry name" value="Dihydro-acid_dehy_C"/>
</dbReference>
<dbReference type="InterPro" id="IPR004404">
    <property type="entry name" value="DihydroxyA_deHydtase"/>
</dbReference>
<dbReference type="InterPro" id="IPR020558">
    <property type="entry name" value="DiOHA_6PGluconate_deHydtase_CS"/>
</dbReference>
<dbReference type="InterPro" id="IPR056740">
    <property type="entry name" value="ILV_EDD_C"/>
</dbReference>
<dbReference type="InterPro" id="IPR000581">
    <property type="entry name" value="ILV_EDD_N"/>
</dbReference>
<dbReference type="InterPro" id="IPR037237">
    <property type="entry name" value="IlvD/EDD_N"/>
</dbReference>
<dbReference type="NCBIfam" id="TIGR00110">
    <property type="entry name" value="ilvD"/>
    <property type="match status" value="1"/>
</dbReference>
<dbReference type="NCBIfam" id="NF002068">
    <property type="entry name" value="PRK00911.1"/>
    <property type="match status" value="1"/>
</dbReference>
<dbReference type="PANTHER" id="PTHR21000">
    <property type="entry name" value="DIHYDROXY-ACID DEHYDRATASE DAD"/>
    <property type="match status" value="1"/>
</dbReference>
<dbReference type="PANTHER" id="PTHR21000:SF5">
    <property type="entry name" value="DIHYDROXY-ACID DEHYDRATASE, MITOCHONDRIAL"/>
    <property type="match status" value="1"/>
</dbReference>
<dbReference type="Pfam" id="PF24877">
    <property type="entry name" value="ILV_EDD_C"/>
    <property type="match status" value="1"/>
</dbReference>
<dbReference type="Pfam" id="PF00920">
    <property type="entry name" value="ILVD_EDD_N"/>
    <property type="match status" value="1"/>
</dbReference>
<dbReference type="SUPFAM" id="SSF143975">
    <property type="entry name" value="IlvD/EDD N-terminal domain-like"/>
    <property type="match status" value="1"/>
</dbReference>
<dbReference type="SUPFAM" id="SSF52016">
    <property type="entry name" value="LeuD/IlvD-like"/>
    <property type="match status" value="1"/>
</dbReference>
<dbReference type="PROSITE" id="PS00886">
    <property type="entry name" value="ILVD_EDD_1"/>
    <property type="match status" value="1"/>
</dbReference>
<dbReference type="PROSITE" id="PS00887">
    <property type="entry name" value="ILVD_EDD_2"/>
    <property type="match status" value="1"/>
</dbReference>
<name>ILVD_SYNSC</name>
<keyword id="KW-0001">2Fe-2S</keyword>
<keyword id="KW-0028">Amino-acid biosynthesis</keyword>
<keyword id="KW-0100">Branched-chain amino acid biosynthesis</keyword>
<keyword id="KW-0408">Iron</keyword>
<keyword id="KW-0411">Iron-sulfur</keyword>
<keyword id="KW-0456">Lyase</keyword>
<keyword id="KW-0460">Magnesium</keyword>
<keyword id="KW-0479">Metal-binding</keyword>
<protein>
    <recommendedName>
        <fullName evidence="1">Dihydroxy-acid dehydratase</fullName>
        <shortName evidence="1">DAD</shortName>
        <ecNumber evidence="1">4.2.1.9</ecNumber>
    </recommendedName>
</protein>
<reference key="1">
    <citation type="submission" date="2005-07" db="EMBL/GenBank/DDBJ databases">
        <title>Complete sequence of Synechococcus sp. CC9605.</title>
        <authorList>
            <consortium name="US DOE Joint Genome Institute"/>
            <person name="Copeland A."/>
            <person name="Lucas S."/>
            <person name="Lapidus A."/>
            <person name="Barry K."/>
            <person name="Detter J.C."/>
            <person name="Glavina T."/>
            <person name="Hammon N."/>
            <person name="Israni S."/>
            <person name="Pitluck S."/>
            <person name="Schmutz J."/>
            <person name="Martinez M."/>
            <person name="Larimer F."/>
            <person name="Land M."/>
            <person name="Kyrpides N."/>
            <person name="Ivanova N."/>
            <person name="Richardson P."/>
        </authorList>
    </citation>
    <scope>NUCLEOTIDE SEQUENCE [LARGE SCALE GENOMIC DNA]</scope>
    <source>
        <strain>CC9605</strain>
    </source>
</reference>
<proteinExistence type="inferred from homology"/>
<feature type="chain" id="PRO_1000001077" description="Dihydroxy-acid dehydratase">
    <location>
        <begin position="1"/>
        <end position="557"/>
    </location>
</feature>
<feature type="active site" description="Proton acceptor" evidence="1">
    <location>
        <position position="470"/>
    </location>
</feature>
<feature type="binding site" evidence="1">
    <location>
        <position position="47"/>
    </location>
    <ligand>
        <name>[2Fe-2S] cluster</name>
        <dbReference type="ChEBI" id="CHEBI:190135"/>
    </ligand>
</feature>
<feature type="binding site" evidence="1">
    <location>
        <position position="79"/>
    </location>
    <ligand>
        <name>Mg(2+)</name>
        <dbReference type="ChEBI" id="CHEBI:18420"/>
    </ligand>
</feature>
<feature type="binding site" evidence="1">
    <location>
        <position position="120"/>
    </location>
    <ligand>
        <name>[2Fe-2S] cluster</name>
        <dbReference type="ChEBI" id="CHEBI:190135"/>
    </ligand>
</feature>
<feature type="binding site" evidence="1">
    <location>
        <position position="121"/>
    </location>
    <ligand>
        <name>Mg(2+)</name>
        <dbReference type="ChEBI" id="CHEBI:18420"/>
    </ligand>
</feature>
<feature type="binding site" description="via carbamate group" evidence="1">
    <location>
        <position position="122"/>
    </location>
    <ligand>
        <name>Mg(2+)</name>
        <dbReference type="ChEBI" id="CHEBI:18420"/>
    </ligand>
</feature>
<feature type="binding site" evidence="1">
    <location>
        <position position="192"/>
    </location>
    <ligand>
        <name>[2Fe-2S] cluster</name>
        <dbReference type="ChEBI" id="CHEBI:190135"/>
    </ligand>
</feature>
<feature type="binding site" evidence="1">
    <location>
        <position position="444"/>
    </location>
    <ligand>
        <name>Mg(2+)</name>
        <dbReference type="ChEBI" id="CHEBI:18420"/>
    </ligand>
</feature>
<feature type="modified residue" description="N6-carboxylysine" evidence="1">
    <location>
        <position position="122"/>
    </location>
</feature>